<comment type="function">
    <text evidence="1">Specifically methylates position 2 of adenine 2503 in 23S rRNA and position 2 of adenine 37 in tRNAs. m2A2503 modification seems to play a crucial role in the proofreading step occurring at the peptidyl transferase center and thus would serve to optimize ribosomal fidelity.</text>
</comment>
<comment type="catalytic activity">
    <reaction evidence="1">
        <text>adenosine(2503) in 23S rRNA + 2 reduced [2Fe-2S]-[ferredoxin] + 2 S-adenosyl-L-methionine = 2-methyladenosine(2503) in 23S rRNA + 5'-deoxyadenosine + L-methionine + 2 oxidized [2Fe-2S]-[ferredoxin] + S-adenosyl-L-homocysteine</text>
        <dbReference type="Rhea" id="RHEA:42916"/>
        <dbReference type="Rhea" id="RHEA-COMP:10000"/>
        <dbReference type="Rhea" id="RHEA-COMP:10001"/>
        <dbReference type="Rhea" id="RHEA-COMP:10152"/>
        <dbReference type="Rhea" id="RHEA-COMP:10282"/>
        <dbReference type="ChEBI" id="CHEBI:17319"/>
        <dbReference type="ChEBI" id="CHEBI:33737"/>
        <dbReference type="ChEBI" id="CHEBI:33738"/>
        <dbReference type="ChEBI" id="CHEBI:57844"/>
        <dbReference type="ChEBI" id="CHEBI:57856"/>
        <dbReference type="ChEBI" id="CHEBI:59789"/>
        <dbReference type="ChEBI" id="CHEBI:74411"/>
        <dbReference type="ChEBI" id="CHEBI:74497"/>
        <dbReference type="EC" id="2.1.1.192"/>
    </reaction>
</comment>
<comment type="catalytic activity">
    <reaction evidence="1">
        <text>adenosine(37) in tRNA + 2 reduced [2Fe-2S]-[ferredoxin] + 2 S-adenosyl-L-methionine = 2-methyladenosine(37) in tRNA + 5'-deoxyadenosine + L-methionine + 2 oxidized [2Fe-2S]-[ferredoxin] + S-adenosyl-L-homocysteine</text>
        <dbReference type="Rhea" id="RHEA:43332"/>
        <dbReference type="Rhea" id="RHEA-COMP:10000"/>
        <dbReference type="Rhea" id="RHEA-COMP:10001"/>
        <dbReference type="Rhea" id="RHEA-COMP:10162"/>
        <dbReference type="Rhea" id="RHEA-COMP:10485"/>
        <dbReference type="ChEBI" id="CHEBI:17319"/>
        <dbReference type="ChEBI" id="CHEBI:33737"/>
        <dbReference type="ChEBI" id="CHEBI:33738"/>
        <dbReference type="ChEBI" id="CHEBI:57844"/>
        <dbReference type="ChEBI" id="CHEBI:57856"/>
        <dbReference type="ChEBI" id="CHEBI:59789"/>
        <dbReference type="ChEBI" id="CHEBI:74411"/>
        <dbReference type="ChEBI" id="CHEBI:74497"/>
        <dbReference type="EC" id="2.1.1.192"/>
    </reaction>
</comment>
<comment type="cofactor">
    <cofactor evidence="1">
        <name>[4Fe-4S] cluster</name>
        <dbReference type="ChEBI" id="CHEBI:49883"/>
    </cofactor>
    <text evidence="1">Binds 1 [4Fe-4S] cluster. The cluster is coordinated with 3 cysteines and an exchangeable S-adenosyl-L-methionine.</text>
</comment>
<comment type="subcellular location">
    <subcellularLocation>
        <location evidence="1">Cytoplasm</location>
    </subcellularLocation>
</comment>
<comment type="miscellaneous">
    <text evidence="1">Reaction proceeds by a ping-pong mechanism involving intermediate methylation of a conserved cysteine residue.</text>
</comment>
<comment type="similarity">
    <text evidence="1">Belongs to the radical SAM superfamily. RlmN family.</text>
</comment>
<sequence length="364" mass="40934">MKTNLLNYDLQGLTRHFADMGEKPFRAKQVMRWMHQSGAQNFNEMTDLAKSLRHKLNEQAGIEIPKLMMSQKSSDGTRKWLLDVGTGNGVETVFIPESDRGTLCISSQVGCALECTFCSTGRQGFNRNLTAAEIIGQLWWANKAMGVTPKNERVISNVVMMGMGEPMANFDNVVTALSIMLDDHGYGLSRRRVTVSTSGMVPQMDRLRDVMPVALAVSLHASNDEVRNQIVPLNKKYPLKELMAACQRYLVKAPRDFITFEYVMLDGINDKAQHARELIELVTDVPCKFNLIPFNPFPNSGYERSSNENIRVFRDILQQAGFVVTVRKTRGDDIDAACGQLAGQVQDKTRRQQKWQQILIGQQG</sequence>
<accession>A1ISB3</accession>
<protein>
    <recommendedName>
        <fullName evidence="1">Dual-specificity RNA methyltransferase RlmN</fullName>
        <ecNumber evidence="1">2.1.1.192</ecNumber>
    </recommendedName>
    <alternativeName>
        <fullName evidence="1">23S rRNA (adenine(2503)-C(2))-methyltransferase</fullName>
    </alternativeName>
    <alternativeName>
        <fullName evidence="1">23S rRNA m2A2503 methyltransferase</fullName>
    </alternativeName>
    <alternativeName>
        <fullName evidence="1">Ribosomal RNA large subunit methyltransferase N</fullName>
    </alternativeName>
    <alternativeName>
        <fullName evidence="1">tRNA (adenine(37)-C(2))-methyltransferase</fullName>
    </alternativeName>
    <alternativeName>
        <fullName evidence="1">tRNA m2A37 methyltransferase</fullName>
    </alternativeName>
</protein>
<keyword id="KW-0004">4Fe-4S</keyword>
<keyword id="KW-0963">Cytoplasm</keyword>
<keyword id="KW-1015">Disulfide bond</keyword>
<keyword id="KW-0408">Iron</keyword>
<keyword id="KW-0411">Iron-sulfur</keyword>
<keyword id="KW-0479">Metal-binding</keyword>
<keyword id="KW-0489">Methyltransferase</keyword>
<keyword id="KW-0698">rRNA processing</keyword>
<keyword id="KW-0949">S-adenosyl-L-methionine</keyword>
<keyword id="KW-0808">Transferase</keyword>
<keyword id="KW-0819">tRNA processing</keyword>
<dbReference type="EC" id="2.1.1.192" evidence="1"/>
<dbReference type="EMBL" id="AL157959">
    <property type="protein sequence ID" value="CAM08669.1"/>
    <property type="molecule type" value="Genomic_DNA"/>
</dbReference>
<dbReference type="PIR" id="F81843">
    <property type="entry name" value="F81843"/>
</dbReference>
<dbReference type="RefSeq" id="WP_002222371.1">
    <property type="nucleotide sequence ID" value="NC_003116.1"/>
</dbReference>
<dbReference type="SMR" id="A1ISB3"/>
<dbReference type="DNASU" id="907911"/>
<dbReference type="EnsemblBacteria" id="CAM08669">
    <property type="protein sequence ID" value="CAM08669"/>
    <property type="gene ID" value="NMA1522"/>
</dbReference>
<dbReference type="GeneID" id="93385891"/>
<dbReference type="KEGG" id="nma:NMA1522"/>
<dbReference type="HOGENOM" id="CLU_029101_2_0_4"/>
<dbReference type="Proteomes" id="UP000000626">
    <property type="component" value="Chromosome"/>
</dbReference>
<dbReference type="GO" id="GO:0005737">
    <property type="term" value="C:cytoplasm"/>
    <property type="evidence" value="ECO:0007669"/>
    <property type="project" value="UniProtKB-SubCell"/>
</dbReference>
<dbReference type="GO" id="GO:0051539">
    <property type="term" value="F:4 iron, 4 sulfur cluster binding"/>
    <property type="evidence" value="ECO:0007669"/>
    <property type="project" value="UniProtKB-UniRule"/>
</dbReference>
<dbReference type="GO" id="GO:0046872">
    <property type="term" value="F:metal ion binding"/>
    <property type="evidence" value="ECO:0007669"/>
    <property type="project" value="UniProtKB-KW"/>
</dbReference>
<dbReference type="GO" id="GO:0070040">
    <property type="term" value="F:rRNA (adenine(2503)-C2-)-methyltransferase activity"/>
    <property type="evidence" value="ECO:0007669"/>
    <property type="project" value="UniProtKB-UniRule"/>
</dbReference>
<dbReference type="GO" id="GO:0019843">
    <property type="term" value="F:rRNA binding"/>
    <property type="evidence" value="ECO:0007669"/>
    <property type="project" value="UniProtKB-UniRule"/>
</dbReference>
<dbReference type="GO" id="GO:0002935">
    <property type="term" value="F:tRNA (adenine(37)-C2)-methyltransferase activity"/>
    <property type="evidence" value="ECO:0007669"/>
    <property type="project" value="UniProtKB-UniRule"/>
</dbReference>
<dbReference type="GO" id="GO:0000049">
    <property type="term" value="F:tRNA binding"/>
    <property type="evidence" value="ECO:0007669"/>
    <property type="project" value="UniProtKB-UniRule"/>
</dbReference>
<dbReference type="GO" id="GO:0070475">
    <property type="term" value="P:rRNA base methylation"/>
    <property type="evidence" value="ECO:0007669"/>
    <property type="project" value="UniProtKB-UniRule"/>
</dbReference>
<dbReference type="GO" id="GO:0030488">
    <property type="term" value="P:tRNA methylation"/>
    <property type="evidence" value="ECO:0007669"/>
    <property type="project" value="UniProtKB-UniRule"/>
</dbReference>
<dbReference type="CDD" id="cd01335">
    <property type="entry name" value="Radical_SAM"/>
    <property type="match status" value="1"/>
</dbReference>
<dbReference type="FunFam" id="1.10.150.530:FF:000003">
    <property type="entry name" value="Dual-specificity RNA methyltransferase RlmN"/>
    <property type="match status" value="1"/>
</dbReference>
<dbReference type="FunFam" id="3.20.20.70:FF:000008">
    <property type="entry name" value="Dual-specificity RNA methyltransferase RlmN"/>
    <property type="match status" value="1"/>
</dbReference>
<dbReference type="Gene3D" id="1.10.150.530">
    <property type="match status" value="1"/>
</dbReference>
<dbReference type="Gene3D" id="3.20.20.70">
    <property type="entry name" value="Aldolase class I"/>
    <property type="match status" value="1"/>
</dbReference>
<dbReference type="HAMAP" id="MF_01849">
    <property type="entry name" value="RNA_methyltr_RlmN"/>
    <property type="match status" value="1"/>
</dbReference>
<dbReference type="InterPro" id="IPR013785">
    <property type="entry name" value="Aldolase_TIM"/>
</dbReference>
<dbReference type="InterPro" id="IPR040072">
    <property type="entry name" value="Methyltransferase_A"/>
</dbReference>
<dbReference type="InterPro" id="IPR048641">
    <property type="entry name" value="RlmN_N"/>
</dbReference>
<dbReference type="InterPro" id="IPR027492">
    <property type="entry name" value="RNA_MTrfase_RlmN"/>
</dbReference>
<dbReference type="InterPro" id="IPR004383">
    <property type="entry name" value="rRNA_lsu_MTrfase_RlmN/Cfr"/>
</dbReference>
<dbReference type="InterPro" id="IPR007197">
    <property type="entry name" value="rSAM"/>
</dbReference>
<dbReference type="NCBIfam" id="TIGR00048">
    <property type="entry name" value="rRNA_mod_RlmN"/>
    <property type="match status" value="1"/>
</dbReference>
<dbReference type="PANTHER" id="PTHR30544">
    <property type="entry name" value="23S RRNA METHYLTRANSFERASE"/>
    <property type="match status" value="1"/>
</dbReference>
<dbReference type="PANTHER" id="PTHR30544:SF5">
    <property type="entry name" value="RADICAL SAM CORE DOMAIN-CONTAINING PROTEIN"/>
    <property type="match status" value="1"/>
</dbReference>
<dbReference type="Pfam" id="PF04055">
    <property type="entry name" value="Radical_SAM"/>
    <property type="match status" value="1"/>
</dbReference>
<dbReference type="Pfam" id="PF21016">
    <property type="entry name" value="RlmN_N"/>
    <property type="match status" value="1"/>
</dbReference>
<dbReference type="PIRSF" id="PIRSF006004">
    <property type="entry name" value="CHP00048"/>
    <property type="match status" value="1"/>
</dbReference>
<dbReference type="SFLD" id="SFLDF00275">
    <property type="entry name" value="adenosine_C2_methyltransferase"/>
    <property type="match status" value="1"/>
</dbReference>
<dbReference type="SFLD" id="SFLDG01062">
    <property type="entry name" value="methyltransferase_(Class_A)"/>
    <property type="match status" value="1"/>
</dbReference>
<dbReference type="SUPFAM" id="SSF102114">
    <property type="entry name" value="Radical SAM enzymes"/>
    <property type="match status" value="1"/>
</dbReference>
<dbReference type="PROSITE" id="PS51918">
    <property type="entry name" value="RADICAL_SAM"/>
    <property type="match status" value="1"/>
</dbReference>
<evidence type="ECO:0000255" key="1">
    <source>
        <dbReference type="HAMAP-Rule" id="MF_01849"/>
    </source>
</evidence>
<evidence type="ECO:0000255" key="2">
    <source>
        <dbReference type="PROSITE-ProRule" id="PRU01266"/>
    </source>
</evidence>
<organism>
    <name type="scientific">Neisseria meningitidis serogroup A / serotype 4A (strain DSM 15465 / Z2491)</name>
    <dbReference type="NCBI Taxonomy" id="122587"/>
    <lineage>
        <taxon>Bacteria</taxon>
        <taxon>Pseudomonadati</taxon>
        <taxon>Pseudomonadota</taxon>
        <taxon>Betaproteobacteria</taxon>
        <taxon>Neisseriales</taxon>
        <taxon>Neisseriaceae</taxon>
        <taxon>Neisseria</taxon>
    </lineage>
</organism>
<proteinExistence type="inferred from homology"/>
<reference key="1">
    <citation type="journal article" date="2000" name="Nature">
        <title>Complete DNA sequence of a serogroup A strain of Neisseria meningitidis Z2491.</title>
        <authorList>
            <person name="Parkhill J."/>
            <person name="Achtman M."/>
            <person name="James K.D."/>
            <person name="Bentley S.D."/>
            <person name="Churcher C.M."/>
            <person name="Klee S.R."/>
            <person name="Morelli G."/>
            <person name="Basham D."/>
            <person name="Brown D."/>
            <person name="Chillingworth T."/>
            <person name="Davies R.M."/>
            <person name="Davis P."/>
            <person name="Devlin K."/>
            <person name="Feltwell T."/>
            <person name="Hamlin N."/>
            <person name="Holroyd S."/>
            <person name="Jagels K."/>
            <person name="Leather S."/>
            <person name="Moule S."/>
            <person name="Mungall K.L."/>
            <person name="Quail M.A."/>
            <person name="Rajandream M.A."/>
            <person name="Rutherford K.M."/>
            <person name="Simmonds M."/>
            <person name="Skelton J."/>
            <person name="Whitehead S."/>
            <person name="Spratt B.G."/>
            <person name="Barrell B.G."/>
        </authorList>
    </citation>
    <scope>NUCLEOTIDE SEQUENCE [LARGE SCALE GENOMIC DNA]</scope>
    <source>
        <strain>DSM 15465 / Z2491</strain>
    </source>
</reference>
<feature type="chain" id="PRO_0000350277" description="Dual-specificity RNA methyltransferase RlmN">
    <location>
        <begin position="1"/>
        <end position="364"/>
    </location>
</feature>
<feature type="domain" description="Radical SAM core" evidence="2">
    <location>
        <begin position="97"/>
        <end position="333"/>
    </location>
</feature>
<feature type="active site" description="Proton acceptor" evidence="1">
    <location>
        <position position="91"/>
    </location>
</feature>
<feature type="active site" description="S-methylcysteine intermediate" evidence="1">
    <location>
        <position position="338"/>
    </location>
</feature>
<feature type="binding site" evidence="1">
    <location>
        <position position="111"/>
    </location>
    <ligand>
        <name>[4Fe-4S] cluster</name>
        <dbReference type="ChEBI" id="CHEBI:49883"/>
        <note>4Fe-4S-S-AdoMet</note>
    </ligand>
</feature>
<feature type="binding site" evidence="1">
    <location>
        <position position="115"/>
    </location>
    <ligand>
        <name>[4Fe-4S] cluster</name>
        <dbReference type="ChEBI" id="CHEBI:49883"/>
        <note>4Fe-4S-S-AdoMet</note>
    </ligand>
</feature>
<feature type="binding site" evidence="1">
    <location>
        <position position="118"/>
    </location>
    <ligand>
        <name>[4Fe-4S] cluster</name>
        <dbReference type="ChEBI" id="CHEBI:49883"/>
        <note>4Fe-4S-S-AdoMet</note>
    </ligand>
</feature>
<feature type="binding site" evidence="1">
    <location>
        <begin position="164"/>
        <end position="165"/>
    </location>
    <ligand>
        <name>S-adenosyl-L-methionine</name>
        <dbReference type="ChEBI" id="CHEBI:59789"/>
    </ligand>
</feature>
<feature type="binding site" evidence="1">
    <location>
        <position position="196"/>
    </location>
    <ligand>
        <name>S-adenosyl-L-methionine</name>
        <dbReference type="ChEBI" id="CHEBI:59789"/>
    </ligand>
</feature>
<feature type="binding site" evidence="1">
    <location>
        <begin position="218"/>
        <end position="220"/>
    </location>
    <ligand>
        <name>S-adenosyl-L-methionine</name>
        <dbReference type="ChEBI" id="CHEBI:59789"/>
    </ligand>
</feature>
<feature type="binding site" evidence="1">
    <location>
        <position position="295"/>
    </location>
    <ligand>
        <name>S-adenosyl-L-methionine</name>
        <dbReference type="ChEBI" id="CHEBI:59789"/>
    </ligand>
</feature>
<feature type="disulfide bond" description="(transient)" evidence="1">
    <location>
        <begin position="104"/>
        <end position="338"/>
    </location>
</feature>
<name>RLMN_NEIMA</name>
<gene>
    <name evidence="1" type="primary">rlmN</name>
    <name type="ordered locus">NMA1522</name>
</gene>